<dbReference type="EC" id="2.1.1.199" evidence="1"/>
<dbReference type="EMBL" id="CP000509">
    <property type="protein sequence ID" value="ABL82573.1"/>
    <property type="molecule type" value="Genomic_DNA"/>
</dbReference>
<dbReference type="RefSeq" id="WP_011756507.1">
    <property type="nucleotide sequence ID" value="NC_008699.1"/>
</dbReference>
<dbReference type="SMR" id="A1SL88"/>
<dbReference type="STRING" id="196162.Noca_3071"/>
<dbReference type="KEGG" id="nca:Noca_3071"/>
<dbReference type="eggNOG" id="COG0275">
    <property type="taxonomic scope" value="Bacteria"/>
</dbReference>
<dbReference type="HOGENOM" id="CLU_038422_0_0_11"/>
<dbReference type="OrthoDB" id="9806637at2"/>
<dbReference type="Proteomes" id="UP000000640">
    <property type="component" value="Chromosome"/>
</dbReference>
<dbReference type="GO" id="GO:0005737">
    <property type="term" value="C:cytoplasm"/>
    <property type="evidence" value="ECO:0007669"/>
    <property type="project" value="UniProtKB-SubCell"/>
</dbReference>
<dbReference type="GO" id="GO:0071424">
    <property type="term" value="F:rRNA (cytosine-N4-)-methyltransferase activity"/>
    <property type="evidence" value="ECO:0007669"/>
    <property type="project" value="UniProtKB-UniRule"/>
</dbReference>
<dbReference type="GO" id="GO:0070475">
    <property type="term" value="P:rRNA base methylation"/>
    <property type="evidence" value="ECO:0007669"/>
    <property type="project" value="UniProtKB-UniRule"/>
</dbReference>
<dbReference type="FunFam" id="1.10.150.170:FF:000001">
    <property type="entry name" value="Ribosomal RNA small subunit methyltransferase H"/>
    <property type="match status" value="1"/>
</dbReference>
<dbReference type="Gene3D" id="1.10.150.170">
    <property type="entry name" value="Putative methyltransferase TM0872, insert domain"/>
    <property type="match status" value="1"/>
</dbReference>
<dbReference type="Gene3D" id="3.40.50.150">
    <property type="entry name" value="Vaccinia Virus protein VP39"/>
    <property type="match status" value="1"/>
</dbReference>
<dbReference type="HAMAP" id="MF_01007">
    <property type="entry name" value="16SrRNA_methyltr_H"/>
    <property type="match status" value="1"/>
</dbReference>
<dbReference type="InterPro" id="IPR002903">
    <property type="entry name" value="RsmH"/>
</dbReference>
<dbReference type="InterPro" id="IPR023397">
    <property type="entry name" value="SAM-dep_MeTrfase_MraW_recog"/>
</dbReference>
<dbReference type="InterPro" id="IPR029063">
    <property type="entry name" value="SAM-dependent_MTases_sf"/>
</dbReference>
<dbReference type="NCBIfam" id="TIGR00006">
    <property type="entry name" value="16S rRNA (cytosine(1402)-N(4))-methyltransferase RsmH"/>
    <property type="match status" value="1"/>
</dbReference>
<dbReference type="PANTHER" id="PTHR11265:SF0">
    <property type="entry name" value="12S RRNA N4-METHYLCYTIDINE METHYLTRANSFERASE"/>
    <property type="match status" value="1"/>
</dbReference>
<dbReference type="PANTHER" id="PTHR11265">
    <property type="entry name" value="S-ADENOSYL-METHYLTRANSFERASE MRAW"/>
    <property type="match status" value="1"/>
</dbReference>
<dbReference type="Pfam" id="PF01795">
    <property type="entry name" value="Methyltransf_5"/>
    <property type="match status" value="1"/>
</dbReference>
<dbReference type="PIRSF" id="PIRSF004486">
    <property type="entry name" value="MraW"/>
    <property type="match status" value="1"/>
</dbReference>
<dbReference type="SUPFAM" id="SSF81799">
    <property type="entry name" value="Putative methyltransferase TM0872, insert domain"/>
    <property type="match status" value="1"/>
</dbReference>
<dbReference type="SUPFAM" id="SSF53335">
    <property type="entry name" value="S-adenosyl-L-methionine-dependent methyltransferases"/>
    <property type="match status" value="1"/>
</dbReference>
<accession>A1SL88</accession>
<reference key="1">
    <citation type="submission" date="2006-12" db="EMBL/GenBank/DDBJ databases">
        <title>Complete sequence of chromosome 1 of Nocardioides sp. JS614.</title>
        <authorList>
            <person name="Copeland A."/>
            <person name="Lucas S."/>
            <person name="Lapidus A."/>
            <person name="Barry K."/>
            <person name="Detter J.C."/>
            <person name="Glavina del Rio T."/>
            <person name="Hammon N."/>
            <person name="Israni S."/>
            <person name="Dalin E."/>
            <person name="Tice H."/>
            <person name="Pitluck S."/>
            <person name="Thompson L.S."/>
            <person name="Brettin T."/>
            <person name="Bruce D."/>
            <person name="Han C."/>
            <person name="Tapia R."/>
            <person name="Schmutz J."/>
            <person name="Larimer F."/>
            <person name="Land M."/>
            <person name="Hauser L."/>
            <person name="Kyrpides N."/>
            <person name="Kim E."/>
            <person name="Mattes T."/>
            <person name="Gossett J."/>
            <person name="Richardson P."/>
        </authorList>
    </citation>
    <scope>NUCLEOTIDE SEQUENCE [LARGE SCALE GENOMIC DNA]</scope>
    <source>
        <strain>ATCC BAA-499 / JS614</strain>
    </source>
</reference>
<proteinExistence type="inferred from homology"/>
<keyword id="KW-0963">Cytoplasm</keyword>
<keyword id="KW-0489">Methyltransferase</keyword>
<keyword id="KW-1185">Reference proteome</keyword>
<keyword id="KW-0698">rRNA processing</keyword>
<keyword id="KW-0949">S-adenosyl-L-methionine</keyword>
<keyword id="KW-0808">Transferase</keyword>
<name>RSMH_NOCSJ</name>
<gene>
    <name evidence="1" type="primary">rsmH</name>
    <name type="synonym">mraW</name>
    <name type="ordered locus">Noca_3071</name>
</gene>
<comment type="function">
    <text evidence="1">Specifically methylates the N4 position of cytidine in position 1402 (C1402) of 16S rRNA.</text>
</comment>
<comment type="catalytic activity">
    <reaction evidence="1">
        <text>cytidine(1402) in 16S rRNA + S-adenosyl-L-methionine = N(4)-methylcytidine(1402) in 16S rRNA + S-adenosyl-L-homocysteine + H(+)</text>
        <dbReference type="Rhea" id="RHEA:42928"/>
        <dbReference type="Rhea" id="RHEA-COMP:10286"/>
        <dbReference type="Rhea" id="RHEA-COMP:10287"/>
        <dbReference type="ChEBI" id="CHEBI:15378"/>
        <dbReference type="ChEBI" id="CHEBI:57856"/>
        <dbReference type="ChEBI" id="CHEBI:59789"/>
        <dbReference type="ChEBI" id="CHEBI:74506"/>
        <dbReference type="ChEBI" id="CHEBI:82748"/>
        <dbReference type="EC" id="2.1.1.199"/>
    </reaction>
</comment>
<comment type="subcellular location">
    <subcellularLocation>
        <location evidence="1">Cytoplasm</location>
    </subcellularLocation>
</comment>
<comment type="similarity">
    <text evidence="1">Belongs to the methyltransferase superfamily. RsmH family.</text>
</comment>
<sequence>MSGPSHVPVLLDRVVALLAPPLEREGSVLVDATLGLGGHTEAVLTRFDLARVVGIDRDPEALALAGRRLAPFGDRFTGVHAVYDELPDVLARLGLDAVDAVLFDLGVSSMQLDVRERGFAYAEDAPLDMRMDGSTGPTAADVLNTYAAADLARILREYGEERFARKIAAAVVRERAKEPFTRSGRLVELLYAEIPAPARRTGGHPAKRTFQALRMEVNDELAVLRRAIPAAIDAIGVGGRVVVESYHSLEDRLVKQAFVAASRLDVPEDLPFVPAGHEPALRLVTRGAEKAGPEEIALNPRAASVRLRAIERTSKGAAA</sequence>
<evidence type="ECO:0000255" key="1">
    <source>
        <dbReference type="HAMAP-Rule" id="MF_01007"/>
    </source>
</evidence>
<organism>
    <name type="scientific">Nocardioides sp. (strain ATCC BAA-499 / JS614)</name>
    <dbReference type="NCBI Taxonomy" id="196162"/>
    <lineage>
        <taxon>Bacteria</taxon>
        <taxon>Bacillati</taxon>
        <taxon>Actinomycetota</taxon>
        <taxon>Actinomycetes</taxon>
        <taxon>Propionibacteriales</taxon>
        <taxon>Nocardioidaceae</taxon>
        <taxon>Nocardioides</taxon>
    </lineage>
</organism>
<protein>
    <recommendedName>
        <fullName evidence="1">Ribosomal RNA small subunit methyltransferase H</fullName>
        <ecNumber evidence="1">2.1.1.199</ecNumber>
    </recommendedName>
    <alternativeName>
        <fullName evidence="1">16S rRNA m(4)C1402 methyltransferase</fullName>
    </alternativeName>
    <alternativeName>
        <fullName evidence="1">rRNA (cytosine-N(4)-)-methyltransferase RsmH</fullName>
    </alternativeName>
</protein>
<feature type="chain" id="PRO_0000387011" description="Ribosomal RNA small subunit methyltransferase H">
    <location>
        <begin position="1"/>
        <end position="319"/>
    </location>
</feature>
<feature type="binding site" evidence="1">
    <location>
        <begin position="37"/>
        <end position="39"/>
    </location>
    <ligand>
        <name>S-adenosyl-L-methionine</name>
        <dbReference type="ChEBI" id="CHEBI:59789"/>
    </ligand>
</feature>
<feature type="binding site" evidence="1">
    <location>
        <position position="56"/>
    </location>
    <ligand>
        <name>S-adenosyl-L-methionine</name>
        <dbReference type="ChEBI" id="CHEBI:59789"/>
    </ligand>
</feature>
<feature type="binding site" evidence="1">
    <location>
        <position position="90"/>
    </location>
    <ligand>
        <name>S-adenosyl-L-methionine</name>
        <dbReference type="ChEBI" id="CHEBI:59789"/>
    </ligand>
</feature>
<feature type="binding site" evidence="1">
    <location>
        <position position="104"/>
    </location>
    <ligand>
        <name>S-adenosyl-L-methionine</name>
        <dbReference type="ChEBI" id="CHEBI:59789"/>
    </ligand>
</feature>
<feature type="binding site" evidence="1">
    <location>
        <position position="111"/>
    </location>
    <ligand>
        <name>S-adenosyl-L-methionine</name>
        <dbReference type="ChEBI" id="CHEBI:59789"/>
    </ligand>
</feature>